<name>IPNS_STRJU</name>
<sequence>MPILMPSAEVPTIDISPLSGDDAKAKQRVAQEINKAARGSGFFYASNHGVDVQLLQDVVNEFHRNMSDQEKHDLAINAYNKDNPHVRNGYYKAIKGKKAVESFCYLNPSFSDDHPMIKSETPMHEVNLWPDEEKHPRFRPFCEDYYRQLLRLSTVIMRGYALALGRREDFFDEALAEADTLSSVSLIRYPYLEEYPPVKTGADGTKLSFEDHLDVSMITVLYQTEVQNLQVETVDGWQDIPRSDEDFLVNCGTYMGHITHDYFPAPNHRVKFINAERLSLPFFLNAGHNSVIEPFVPEGAAGTVKNPTTSYGEYLQHGLRALIVKNGQT</sequence>
<protein>
    <recommendedName>
        <fullName>Isopenicillin N synthase</fullName>
        <shortName>IPNS</shortName>
        <ecNumber>1.21.3.1</ecNumber>
    </recommendedName>
</protein>
<feature type="chain" id="PRO_0000219507" description="Isopenicillin N synthase">
    <location>
        <begin position="1"/>
        <end position="329"/>
    </location>
</feature>
<feature type="domain" description="Fe2OG dioxygenase" evidence="2">
    <location>
        <begin position="180"/>
        <end position="286"/>
    </location>
</feature>
<feature type="binding site" evidence="1">
    <location>
        <position position="87"/>
    </location>
    <ligand>
        <name>isopenicillin N</name>
        <dbReference type="ChEBI" id="CHEBI:58399"/>
    </ligand>
</feature>
<feature type="binding site" evidence="1">
    <location>
        <position position="87"/>
    </location>
    <ligand>
        <name>N-[(5S)-5-amino-5-carboxypentanoyl]-L-cysteinyl-D-valine</name>
        <dbReference type="ChEBI" id="CHEBI:58572"/>
    </ligand>
</feature>
<feature type="binding site" evidence="1">
    <location>
        <position position="91"/>
    </location>
    <ligand>
        <name>isopenicillin N</name>
        <dbReference type="ChEBI" id="CHEBI:58399"/>
    </ligand>
</feature>
<feature type="binding site" evidence="1">
    <location>
        <position position="91"/>
    </location>
    <ligand>
        <name>N-[(5S)-5-amino-5-carboxypentanoyl]-L-cysteinyl-D-valine</name>
        <dbReference type="ChEBI" id="CHEBI:58572"/>
    </ligand>
</feature>
<feature type="binding site" evidence="1">
    <location>
        <position position="183"/>
    </location>
    <ligand>
        <name>isopenicillin N</name>
        <dbReference type="ChEBI" id="CHEBI:58399"/>
    </ligand>
</feature>
<feature type="binding site" evidence="1">
    <location>
        <position position="183"/>
    </location>
    <ligand>
        <name>N-[(5S)-5-amino-5-carboxypentanoyl]-L-cysteinyl-D-valine</name>
        <dbReference type="ChEBI" id="CHEBI:58572"/>
    </ligand>
</feature>
<feature type="binding site" evidence="1">
    <location>
        <position position="189"/>
    </location>
    <ligand>
        <name>isopenicillin N</name>
        <dbReference type="ChEBI" id="CHEBI:58399"/>
    </ligand>
</feature>
<feature type="binding site" evidence="1">
    <location>
        <position position="189"/>
    </location>
    <ligand>
        <name>N-[(5S)-5-amino-5-carboxypentanoyl]-L-cysteinyl-D-valine</name>
        <dbReference type="ChEBI" id="CHEBI:58572"/>
    </ligand>
</feature>
<feature type="binding site" evidence="2">
    <location>
        <position position="212"/>
    </location>
    <ligand>
        <name>Fe(2+)</name>
        <dbReference type="ChEBI" id="CHEBI:29033"/>
    </ligand>
</feature>
<feature type="binding site" evidence="1">
    <location>
        <position position="212"/>
    </location>
    <ligand>
        <name>N-[(5S)-5-amino-5-carboxypentanoyl]-L-cysteinyl-D-valine</name>
        <dbReference type="ChEBI" id="CHEBI:58572"/>
    </ligand>
</feature>
<feature type="binding site" evidence="2">
    <location>
        <position position="214"/>
    </location>
    <ligand>
        <name>Fe(2+)</name>
        <dbReference type="ChEBI" id="CHEBI:29033"/>
    </ligand>
</feature>
<feature type="binding site" evidence="1">
    <location>
        <position position="214"/>
    </location>
    <ligand>
        <name>N-[(5S)-5-amino-5-carboxypentanoyl]-L-cysteinyl-D-valine</name>
        <dbReference type="ChEBI" id="CHEBI:58572"/>
    </ligand>
</feature>
<feature type="binding site" evidence="2">
    <location>
        <position position="268"/>
    </location>
    <ligand>
        <name>Fe(2+)</name>
        <dbReference type="ChEBI" id="CHEBI:29033"/>
    </ligand>
</feature>
<feature type="binding site" evidence="2">
    <location>
        <position position="277"/>
    </location>
    <ligand>
        <name>2-oxoglutarate</name>
        <dbReference type="ChEBI" id="CHEBI:16810"/>
    </ligand>
</feature>
<feature type="binding site" evidence="1">
    <location>
        <position position="279"/>
    </location>
    <ligand>
        <name>isopenicillin N</name>
        <dbReference type="ChEBI" id="CHEBI:58399"/>
    </ligand>
</feature>
<feature type="binding site" evidence="1">
    <location>
        <position position="279"/>
    </location>
    <ligand>
        <name>N-[(5S)-5-amino-5-carboxypentanoyl]-L-cysteinyl-D-valine</name>
        <dbReference type="ChEBI" id="CHEBI:58572"/>
    </ligand>
</feature>
<gene>
    <name type="primary">pcbC</name>
</gene>
<evidence type="ECO:0000250" key="1">
    <source>
        <dbReference type="UniProtKB" id="P05326"/>
    </source>
</evidence>
<evidence type="ECO:0000255" key="2">
    <source>
        <dbReference type="PROSITE-ProRule" id="PRU00805"/>
    </source>
</evidence>
<evidence type="ECO:0000305" key="3"/>
<dbReference type="EC" id="1.21.3.1"/>
<dbReference type="EMBL" id="M36687">
    <property type="protein sequence ID" value="AAA26772.1"/>
    <property type="molecule type" value="Genomic_DNA"/>
</dbReference>
<dbReference type="RefSeq" id="WP_194292111.1">
    <property type="nucleotide sequence ID" value="NZ_JBEPDZ010000009.1"/>
</dbReference>
<dbReference type="SMR" id="P18286"/>
<dbReference type="BRENDA" id="1.21.3.1">
    <property type="organism ID" value="6045"/>
</dbReference>
<dbReference type="UniPathway" id="UPA00149">
    <property type="reaction ID" value="UER00240"/>
</dbReference>
<dbReference type="GO" id="GO:0005506">
    <property type="term" value="F:iron ion binding"/>
    <property type="evidence" value="ECO:0007669"/>
    <property type="project" value="InterPro"/>
</dbReference>
<dbReference type="GO" id="GO:0016216">
    <property type="term" value="F:isopenicillin-N synthase activity"/>
    <property type="evidence" value="ECO:0007669"/>
    <property type="project" value="UniProtKB-EC"/>
</dbReference>
<dbReference type="GO" id="GO:0031418">
    <property type="term" value="F:L-ascorbic acid binding"/>
    <property type="evidence" value="ECO:0007669"/>
    <property type="project" value="UniProtKB-KW"/>
</dbReference>
<dbReference type="GO" id="GO:0017000">
    <property type="term" value="P:antibiotic biosynthetic process"/>
    <property type="evidence" value="ECO:0007669"/>
    <property type="project" value="UniProtKB-KW"/>
</dbReference>
<dbReference type="Gene3D" id="2.60.120.330">
    <property type="entry name" value="B-lactam Antibiotic, Isopenicillin N Synthase, Chain"/>
    <property type="match status" value="1"/>
</dbReference>
<dbReference type="InterPro" id="IPR026992">
    <property type="entry name" value="DIOX_N"/>
</dbReference>
<dbReference type="InterPro" id="IPR044861">
    <property type="entry name" value="IPNS-like_FE2OG_OXY"/>
</dbReference>
<dbReference type="InterPro" id="IPR027443">
    <property type="entry name" value="IPNS-like_sf"/>
</dbReference>
<dbReference type="InterPro" id="IPR002057">
    <property type="entry name" value="Isopenicillin-N_synth_CS"/>
</dbReference>
<dbReference type="InterPro" id="IPR005123">
    <property type="entry name" value="Oxoglu/Fe-dep_dioxygenase_dom"/>
</dbReference>
<dbReference type="PANTHER" id="PTHR10209:SF867">
    <property type="entry name" value="2-OXOGLUTARATE (2OG) AND FE(II)-DEPENDENT OXYGENASE SUPERFAMILY PROTEIN"/>
    <property type="match status" value="1"/>
</dbReference>
<dbReference type="PANTHER" id="PTHR10209">
    <property type="entry name" value="OXIDOREDUCTASE, 2OG-FE II OXYGENASE FAMILY PROTEIN"/>
    <property type="match status" value="1"/>
</dbReference>
<dbReference type="Pfam" id="PF03171">
    <property type="entry name" value="2OG-FeII_Oxy"/>
    <property type="match status" value="1"/>
</dbReference>
<dbReference type="Pfam" id="PF14226">
    <property type="entry name" value="DIOX_N"/>
    <property type="match status" value="1"/>
</dbReference>
<dbReference type="PRINTS" id="PR00682">
    <property type="entry name" value="IPNSYNTHASE"/>
</dbReference>
<dbReference type="SUPFAM" id="SSF51197">
    <property type="entry name" value="Clavaminate synthase-like"/>
    <property type="match status" value="1"/>
</dbReference>
<dbReference type="PROSITE" id="PS51471">
    <property type="entry name" value="FE2OG_OXY"/>
    <property type="match status" value="1"/>
</dbReference>
<dbReference type="PROSITE" id="PS00185">
    <property type="entry name" value="IPNS_1"/>
    <property type="match status" value="1"/>
</dbReference>
<dbReference type="PROSITE" id="PS00186">
    <property type="entry name" value="IPNS_2"/>
    <property type="match status" value="1"/>
</dbReference>
<organism>
    <name type="scientific">Streptomyces jumonjinensis</name>
    <dbReference type="NCBI Taxonomy" id="1945"/>
    <lineage>
        <taxon>Bacteria</taxon>
        <taxon>Bacillati</taxon>
        <taxon>Actinomycetota</taxon>
        <taxon>Actinomycetes</taxon>
        <taxon>Kitasatosporales</taxon>
        <taxon>Streptomycetaceae</taxon>
        <taxon>Streptomyces</taxon>
    </lineage>
</organism>
<reference key="1">
    <citation type="journal article" date="1988" name="Mol. Gen. Genet.">
        <title>Cloning and comparative sequence analysis of the gene coding for isopenicillin N synthase in Streptomyces.</title>
        <authorList>
            <person name="Shiffman D."/>
            <person name="Mevarech M."/>
            <person name="Jensen S.E."/>
            <person name="Cohen G."/>
            <person name="Aharonowitz Y."/>
        </authorList>
    </citation>
    <scope>NUCLEOTIDE SEQUENCE [GENOMIC DNA]</scope>
</reference>
<reference key="2">
    <citation type="journal article" date="1996" name="Biochemistry">
        <title>Ferrous active site of isopenicillin N synthase: genetic and sequence analysis of the endogenous ligands.</title>
        <authorList>
            <person name="Borovok I."/>
            <person name="Landman O."/>
            <person name="Kreisberg-Zakarin R."/>
            <person name="Aharonowitz Y."/>
            <person name="Cohen G."/>
        </authorList>
    </citation>
    <scope>MUTAGENESIS OF HISTIDINE AND ASPARTIC ACID RESIDUES</scope>
</reference>
<proteinExistence type="inferred from homology"/>
<comment type="function">
    <text>Removes, in the presence of oxygen, 4 hydrogen atoms from delta-L-(alpha-aminoadipyl)-L-cysteinyl-D-valine (ACV) to form the azetidinone and thiazolidine rings of isopenicillin.</text>
</comment>
<comment type="catalytic activity">
    <reaction>
        <text>N-[(5S)-5-amino-5-carboxypentanoyl]-L-cysteinyl-D-valine + O2 = isopenicillin N + 2 H2O</text>
        <dbReference type="Rhea" id="RHEA:22428"/>
        <dbReference type="ChEBI" id="CHEBI:15377"/>
        <dbReference type="ChEBI" id="CHEBI:15379"/>
        <dbReference type="ChEBI" id="CHEBI:58399"/>
        <dbReference type="ChEBI" id="CHEBI:58572"/>
        <dbReference type="EC" id="1.21.3.1"/>
    </reaction>
</comment>
<comment type="cofactor">
    <cofactor>
        <name>Fe cation</name>
        <dbReference type="ChEBI" id="CHEBI:24875"/>
    </cofactor>
</comment>
<comment type="cofactor">
    <cofactor>
        <name>L-ascorbate</name>
        <dbReference type="ChEBI" id="CHEBI:38290"/>
    </cofactor>
</comment>
<comment type="pathway">
    <text>Antibiotic biosynthesis; penicillin G biosynthesis; penicillin G from L-alpha-aminoadipate and L-cysteine and L-valine: step 2/3.</text>
</comment>
<comment type="similarity">
    <text evidence="3">Belongs to the iron/ascorbate-dependent oxidoreductase family.</text>
</comment>
<keyword id="KW-0045">Antibiotic biosynthesis</keyword>
<keyword id="KW-0408">Iron</keyword>
<keyword id="KW-0479">Metal-binding</keyword>
<keyword id="KW-0560">Oxidoreductase</keyword>
<keyword id="KW-0847">Vitamin C</keyword>
<accession>P18286</accession>